<reference key="1">
    <citation type="journal article" date="2003" name="Nature">
        <title>The genome sequence of the filamentous fungus Neurospora crassa.</title>
        <authorList>
            <person name="Galagan J.E."/>
            <person name="Calvo S.E."/>
            <person name="Borkovich K.A."/>
            <person name="Selker E.U."/>
            <person name="Read N.D."/>
            <person name="Jaffe D.B."/>
            <person name="FitzHugh W."/>
            <person name="Ma L.-J."/>
            <person name="Smirnov S."/>
            <person name="Purcell S."/>
            <person name="Rehman B."/>
            <person name="Elkins T."/>
            <person name="Engels R."/>
            <person name="Wang S."/>
            <person name="Nielsen C.B."/>
            <person name="Butler J."/>
            <person name="Endrizzi M."/>
            <person name="Qui D."/>
            <person name="Ianakiev P."/>
            <person name="Bell-Pedersen D."/>
            <person name="Nelson M.A."/>
            <person name="Werner-Washburne M."/>
            <person name="Selitrennikoff C.P."/>
            <person name="Kinsey J.A."/>
            <person name="Braun E.L."/>
            <person name="Zelter A."/>
            <person name="Schulte U."/>
            <person name="Kothe G.O."/>
            <person name="Jedd G."/>
            <person name="Mewes H.-W."/>
            <person name="Staben C."/>
            <person name="Marcotte E."/>
            <person name="Greenberg D."/>
            <person name="Roy A."/>
            <person name="Foley K."/>
            <person name="Naylor J."/>
            <person name="Stange-Thomann N."/>
            <person name="Barrett R."/>
            <person name="Gnerre S."/>
            <person name="Kamal M."/>
            <person name="Kamvysselis M."/>
            <person name="Mauceli E.W."/>
            <person name="Bielke C."/>
            <person name="Rudd S."/>
            <person name="Frishman D."/>
            <person name="Krystofova S."/>
            <person name="Rasmussen C."/>
            <person name="Metzenberg R.L."/>
            <person name="Perkins D.D."/>
            <person name="Kroken S."/>
            <person name="Cogoni C."/>
            <person name="Macino G."/>
            <person name="Catcheside D.E.A."/>
            <person name="Li W."/>
            <person name="Pratt R.J."/>
            <person name="Osmani S.A."/>
            <person name="DeSouza C.P.C."/>
            <person name="Glass N.L."/>
            <person name="Orbach M.J."/>
            <person name="Berglund J.A."/>
            <person name="Voelker R."/>
            <person name="Yarden O."/>
            <person name="Plamann M."/>
            <person name="Seiler S."/>
            <person name="Dunlap J.C."/>
            <person name="Radford A."/>
            <person name="Aramayo R."/>
            <person name="Natvig D.O."/>
            <person name="Alex L.A."/>
            <person name="Mannhaupt G."/>
            <person name="Ebbole D.J."/>
            <person name="Freitag M."/>
            <person name="Paulsen I."/>
            <person name="Sachs M.S."/>
            <person name="Lander E.S."/>
            <person name="Nusbaum C."/>
            <person name="Birren B.W."/>
        </authorList>
    </citation>
    <scope>NUCLEOTIDE SEQUENCE [LARGE SCALE GENOMIC DNA]</scope>
    <source>
        <strain>ATCC 24698 / 74-OR23-1A / CBS 708.71 / DSM 1257 / FGSC 987</strain>
    </source>
</reference>
<reference evidence="5 6" key="2">
    <citation type="journal article" date="2020" name="Nat. Commun.">
        <title>Analysis of translating mitoribosome reveals functional characteristics of translation in mitochondria of fungi.</title>
        <authorList>
            <person name="Itoh Y."/>
            <person name="Naschberger A."/>
            <person name="Mortezaei N."/>
            <person name="Herrmann J.M."/>
            <person name="Amunts A."/>
        </authorList>
    </citation>
    <scope>STRUCTURE BY ELECTRON MICROSCOPY (2.74 ANGSTROMS)</scope>
</reference>
<comment type="function">
    <text evidence="4">Component of the mitochondrial ribosome (mitoribosome), a dedicated translation machinery responsible for the synthesis of mitochondrial genome-encoded proteins, including at least some of the essential transmembrane subunits of the mitochondrial respiratory chain. The mitoribosomes are attached to the mitochondrial inner membrane and translation products are cotranslationally integrated into the membrane.</text>
</comment>
<comment type="subunit">
    <text evidence="1">Component of the mitochondrial large ribosomal subunit (mt-LSU). Mature N.crassa 74S mitochondrial ribosomes consist of a small (37S) and a large (54S) subunit. The 37S small subunit contains a 16S ribosomal RNA (16S mt-rRNA) and 32 different proteins. The 54S large subunit contains a 23S rRNA (23S mt-rRNA) and 42 different proteins.</text>
</comment>
<comment type="subcellular location">
    <subcellularLocation>
        <location evidence="1">Mitochondrion</location>
    </subcellularLocation>
</comment>
<comment type="similarity">
    <text evidence="3">Belongs to the bacterial ribosomal protein bL9 family.</text>
</comment>
<sequence length="300" mass="33123">MTASALSKWPTCLACLRRLAQPFGTSAARHGEPRARAVPVIRPIVHTQTRAASHRMRLQDQGVVVRLLEDIPKFGRKHAIFRIERGRMRNEWFPKNKAEYMTPARFQELGLTRDAIGEVDRSFVIMSALEAATRPKPEEQKTEEPVPEVQISQVNVPDVTPETAHALLSELIPNTLTFHREPVPIPISQPKPALEPKISPLIARHVPASTPETPSTGEARRAIFGSVSSSDILNQIKALVSGHEEASRIVLGPSSVKIVGLAEDNDRIRHLGRWEIEIAVARAGGLDPVRKSVEILPSAQ</sequence>
<keyword id="KW-0002">3D-structure</keyword>
<keyword id="KW-0496">Mitochondrion</keyword>
<keyword id="KW-1185">Reference proteome</keyword>
<keyword id="KW-0687">Ribonucleoprotein</keyword>
<keyword id="KW-0689">Ribosomal protein</keyword>
<dbReference type="EMBL" id="CM002236">
    <property type="protein sequence ID" value="EAA28681.1"/>
    <property type="molecule type" value="Genomic_DNA"/>
</dbReference>
<dbReference type="RefSeq" id="XP_957917.1">
    <property type="nucleotide sequence ID" value="XM_952824.2"/>
</dbReference>
<dbReference type="PDB" id="6YWS">
    <property type="method" value="EM"/>
    <property type="resolution" value="2.74 A"/>
    <property type="chains" value="G=1-300"/>
</dbReference>
<dbReference type="PDB" id="6YWX">
    <property type="method" value="EM"/>
    <property type="resolution" value="3.10 A"/>
    <property type="chains" value="G=1-300"/>
</dbReference>
<dbReference type="PDBsum" id="6YWS"/>
<dbReference type="PDBsum" id="6YWX"/>
<dbReference type="EMDB" id="EMD-10973"/>
<dbReference type="EMDB" id="EMD-10978"/>
<dbReference type="SMR" id="Q7S054"/>
<dbReference type="STRING" id="367110.Q7S054"/>
<dbReference type="PaxDb" id="5141-EFNCRP00000009733"/>
<dbReference type="EnsemblFungi" id="EAA28681">
    <property type="protein sequence ID" value="EAA28681"/>
    <property type="gene ID" value="NCU09999"/>
</dbReference>
<dbReference type="GeneID" id="3874064"/>
<dbReference type="KEGG" id="ncr:NCU09999"/>
<dbReference type="VEuPathDB" id="FungiDB:NCU09999"/>
<dbReference type="HOGENOM" id="CLU_067878_0_0_1"/>
<dbReference type="InParanoid" id="Q7S054"/>
<dbReference type="OMA" id="RNRWFPA"/>
<dbReference type="OrthoDB" id="2150604at2759"/>
<dbReference type="Proteomes" id="UP000001805">
    <property type="component" value="Chromosome 1, Linkage Group I"/>
</dbReference>
<dbReference type="GO" id="GO:0005739">
    <property type="term" value="C:mitochondrion"/>
    <property type="evidence" value="ECO:0000318"/>
    <property type="project" value="GO_Central"/>
</dbReference>
<dbReference type="GO" id="GO:1990904">
    <property type="term" value="C:ribonucleoprotein complex"/>
    <property type="evidence" value="ECO:0007669"/>
    <property type="project" value="UniProtKB-KW"/>
</dbReference>
<dbReference type="GO" id="GO:0005840">
    <property type="term" value="C:ribosome"/>
    <property type="evidence" value="ECO:0007669"/>
    <property type="project" value="UniProtKB-KW"/>
</dbReference>
<dbReference type="GO" id="GO:0003735">
    <property type="term" value="F:structural constituent of ribosome"/>
    <property type="evidence" value="ECO:0007669"/>
    <property type="project" value="InterPro"/>
</dbReference>
<dbReference type="GO" id="GO:0006412">
    <property type="term" value="P:translation"/>
    <property type="evidence" value="ECO:0007669"/>
    <property type="project" value="InterPro"/>
</dbReference>
<dbReference type="Gene3D" id="3.40.5.10">
    <property type="entry name" value="Ribosomal protein L9, N-terminal domain"/>
    <property type="match status" value="1"/>
</dbReference>
<dbReference type="InterPro" id="IPR000244">
    <property type="entry name" value="Ribosomal_bL9"/>
</dbReference>
<dbReference type="InterPro" id="IPR009027">
    <property type="entry name" value="Ribosomal_bL9/RNase_H1_N"/>
</dbReference>
<dbReference type="InterPro" id="IPR020070">
    <property type="entry name" value="Ribosomal_bL9_N"/>
</dbReference>
<dbReference type="InterPro" id="IPR036935">
    <property type="entry name" value="Ribosomal_bL9_N_sf"/>
</dbReference>
<dbReference type="PANTHER" id="PTHR21368">
    <property type="entry name" value="50S RIBOSOMAL PROTEIN L9"/>
    <property type="match status" value="1"/>
</dbReference>
<dbReference type="Pfam" id="PF01281">
    <property type="entry name" value="Ribosomal_L9_N"/>
    <property type="match status" value="1"/>
</dbReference>
<dbReference type="SUPFAM" id="SSF55658">
    <property type="entry name" value="L9 N-domain-like"/>
    <property type="match status" value="1"/>
</dbReference>
<proteinExistence type="evidence at protein level"/>
<accession>Q7S054</accession>
<protein>
    <recommendedName>
        <fullName evidence="2">Large ribosomal subunit protein bL9m</fullName>
    </recommendedName>
</protein>
<name>RM50_NEUCR</name>
<feature type="chain" id="PRO_0000458600" description="Large ribosomal subunit protein bL9m">
    <location>
        <begin position="1"/>
        <end position="300"/>
    </location>
</feature>
<gene>
    <name type="primary">mrpl50</name>
    <name type="ORF">NCU09999</name>
</gene>
<organism>
    <name type="scientific">Neurospora crassa (strain ATCC 24698 / 74-OR23-1A / CBS 708.71 / DSM 1257 / FGSC 987)</name>
    <dbReference type="NCBI Taxonomy" id="367110"/>
    <lineage>
        <taxon>Eukaryota</taxon>
        <taxon>Fungi</taxon>
        <taxon>Dikarya</taxon>
        <taxon>Ascomycota</taxon>
        <taxon>Pezizomycotina</taxon>
        <taxon>Sordariomycetes</taxon>
        <taxon>Sordariomycetidae</taxon>
        <taxon>Sordariales</taxon>
        <taxon>Sordariaceae</taxon>
        <taxon>Neurospora</taxon>
    </lineage>
</organism>
<evidence type="ECO:0000269" key="1">
    <source>
    </source>
</evidence>
<evidence type="ECO:0000303" key="2">
    <source>
    </source>
</evidence>
<evidence type="ECO:0000305" key="3"/>
<evidence type="ECO:0000305" key="4">
    <source>
    </source>
</evidence>
<evidence type="ECO:0007744" key="5">
    <source>
        <dbReference type="PDB" id="6YWS"/>
    </source>
</evidence>
<evidence type="ECO:0007744" key="6">
    <source>
        <dbReference type="PDB" id="6YWX"/>
    </source>
</evidence>